<reference key="1">
    <citation type="journal article" date="2001" name="Lancet">
        <title>Whole genome sequencing of meticillin-resistant Staphylococcus aureus.</title>
        <authorList>
            <person name="Kuroda M."/>
            <person name="Ohta T."/>
            <person name="Uchiyama I."/>
            <person name="Baba T."/>
            <person name="Yuzawa H."/>
            <person name="Kobayashi I."/>
            <person name="Cui L."/>
            <person name="Oguchi A."/>
            <person name="Aoki K."/>
            <person name="Nagai Y."/>
            <person name="Lian J.-Q."/>
            <person name="Ito T."/>
            <person name="Kanamori M."/>
            <person name="Matsumaru H."/>
            <person name="Maruyama A."/>
            <person name="Murakami H."/>
            <person name="Hosoyama A."/>
            <person name="Mizutani-Ui Y."/>
            <person name="Takahashi N.K."/>
            <person name="Sawano T."/>
            <person name="Inoue R."/>
            <person name="Kaito C."/>
            <person name="Sekimizu K."/>
            <person name="Hirakawa H."/>
            <person name="Kuhara S."/>
            <person name="Goto S."/>
            <person name="Yabuzaki J."/>
            <person name="Kanehisa M."/>
            <person name="Yamashita A."/>
            <person name="Oshima K."/>
            <person name="Furuya K."/>
            <person name="Yoshino C."/>
            <person name="Shiba T."/>
            <person name="Hattori M."/>
            <person name="Ogasawara N."/>
            <person name="Hayashi H."/>
            <person name="Hiramatsu K."/>
        </authorList>
    </citation>
    <scope>NUCLEOTIDE SEQUENCE [LARGE SCALE GENOMIC DNA]</scope>
    <source>
        <strain>N315</strain>
    </source>
</reference>
<reference key="2">
    <citation type="journal article" date="2005" name="J. Microbiol. Methods">
        <title>Correlation of proteomic and transcriptomic profiles of Staphylococcus aureus during the post-exponential phase of growth.</title>
        <authorList>
            <person name="Scherl A."/>
            <person name="Francois P."/>
            <person name="Bento M."/>
            <person name="Deshusses J.M."/>
            <person name="Charbonnier Y."/>
            <person name="Converset V."/>
            <person name="Huyghe A."/>
            <person name="Walter N."/>
            <person name="Hoogland C."/>
            <person name="Appel R.D."/>
            <person name="Sanchez J.-C."/>
            <person name="Zimmermann-Ivol C.G."/>
            <person name="Corthals G.L."/>
            <person name="Hochstrasser D.F."/>
            <person name="Schrenzel J."/>
        </authorList>
    </citation>
    <scope>IDENTIFICATION BY MASS SPECTROMETRY</scope>
    <source>
        <strain>N315</strain>
    </source>
</reference>
<reference key="3">
    <citation type="submission" date="2007-10" db="UniProtKB">
        <title>Shotgun proteomic analysis of total and membrane protein extracts of S. aureus strain N315.</title>
        <authorList>
            <person name="Vaezzadeh A.R."/>
            <person name="Deshusses J."/>
            <person name="Lescuyer P."/>
            <person name="Hochstrasser D.F."/>
        </authorList>
    </citation>
    <scope>IDENTIFICATION BY MASS SPECTROMETRY [LARGE SCALE ANALYSIS]</scope>
    <source>
        <strain>N315</strain>
    </source>
</reference>
<proteinExistence type="evidence at protein level"/>
<evidence type="ECO:0000255" key="1">
    <source>
        <dbReference type="HAMAP-Rule" id="MF_00375"/>
    </source>
</evidence>
<accession>P99096</accession>
<accession>Q99TJ4</accession>
<organism>
    <name type="scientific">Staphylococcus aureus (strain N315)</name>
    <dbReference type="NCBI Taxonomy" id="158879"/>
    <lineage>
        <taxon>Bacteria</taxon>
        <taxon>Bacillati</taxon>
        <taxon>Bacillota</taxon>
        <taxon>Bacilli</taxon>
        <taxon>Bacillales</taxon>
        <taxon>Staphylococcaceae</taxon>
        <taxon>Staphylococcus</taxon>
    </lineage>
</organism>
<keyword id="KW-0963">Cytoplasm</keyword>
<keyword id="KW-0413">Isomerase</keyword>
<keyword id="KW-0627">Porphyrin biosynthesis</keyword>
<keyword id="KW-0663">Pyridoxal phosphate</keyword>
<name>GSA1_STAAN</name>
<dbReference type="EC" id="5.4.3.8" evidence="1"/>
<dbReference type="EMBL" id="BA000018">
    <property type="protein sequence ID" value="BAB42758.1"/>
    <property type="molecule type" value="Genomic_DNA"/>
</dbReference>
<dbReference type="PIR" id="A89950">
    <property type="entry name" value="A89950"/>
</dbReference>
<dbReference type="SMR" id="P99096"/>
<dbReference type="EnsemblBacteria" id="BAB42758">
    <property type="protein sequence ID" value="BAB42758"/>
    <property type="gene ID" value="BAB42758"/>
</dbReference>
<dbReference type="KEGG" id="sau:SA1491"/>
<dbReference type="HOGENOM" id="CLU_016922_1_5_9"/>
<dbReference type="UniPathway" id="UPA00251">
    <property type="reaction ID" value="UER00317"/>
</dbReference>
<dbReference type="GO" id="GO:0005737">
    <property type="term" value="C:cytoplasm"/>
    <property type="evidence" value="ECO:0007669"/>
    <property type="project" value="UniProtKB-SubCell"/>
</dbReference>
<dbReference type="GO" id="GO:0042286">
    <property type="term" value="F:glutamate-1-semialdehyde 2,1-aminomutase activity"/>
    <property type="evidence" value="ECO:0007669"/>
    <property type="project" value="UniProtKB-UniRule"/>
</dbReference>
<dbReference type="GO" id="GO:0030170">
    <property type="term" value="F:pyridoxal phosphate binding"/>
    <property type="evidence" value="ECO:0007669"/>
    <property type="project" value="InterPro"/>
</dbReference>
<dbReference type="GO" id="GO:0008483">
    <property type="term" value="F:transaminase activity"/>
    <property type="evidence" value="ECO:0007669"/>
    <property type="project" value="InterPro"/>
</dbReference>
<dbReference type="GO" id="GO:0006782">
    <property type="term" value="P:protoporphyrinogen IX biosynthetic process"/>
    <property type="evidence" value="ECO:0007669"/>
    <property type="project" value="UniProtKB-UniRule"/>
</dbReference>
<dbReference type="CDD" id="cd00610">
    <property type="entry name" value="OAT_like"/>
    <property type="match status" value="1"/>
</dbReference>
<dbReference type="FunFam" id="3.40.640.10:FF:000021">
    <property type="entry name" value="Glutamate-1-semialdehyde 2,1-aminomutase"/>
    <property type="match status" value="1"/>
</dbReference>
<dbReference type="Gene3D" id="3.90.1150.10">
    <property type="entry name" value="Aspartate Aminotransferase, domain 1"/>
    <property type="match status" value="1"/>
</dbReference>
<dbReference type="Gene3D" id="3.40.640.10">
    <property type="entry name" value="Type I PLP-dependent aspartate aminotransferase-like (Major domain)"/>
    <property type="match status" value="1"/>
</dbReference>
<dbReference type="HAMAP" id="MF_00375">
    <property type="entry name" value="HemL_aminotrans_3"/>
    <property type="match status" value="1"/>
</dbReference>
<dbReference type="InterPro" id="IPR004639">
    <property type="entry name" value="4pyrrol_synth_GluAld_NH2Trfase"/>
</dbReference>
<dbReference type="InterPro" id="IPR005814">
    <property type="entry name" value="Aminotrans_3"/>
</dbReference>
<dbReference type="InterPro" id="IPR049704">
    <property type="entry name" value="Aminotrans_3_PPA_site"/>
</dbReference>
<dbReference type="InterPro" id="IPR015424">
    <property type="entry name" value="PyrdxlP-dep_Trfase"/>
</dbReference>
<dbReference type="InterPro" id="IPR015421">
    <property type="entry name" value="PyrdxlP-dep_Trfase_major"/>
</dbReference>
<dbReference type="InterPro" id="IPR015422">
    <property type="entry name" value="PyrdxlP-dep_Trfase_small"/>
</dbReference>
<dbReference type="NCBIfam" id="TIGR00713">
    <property type="entry name" value="hemL"/>
    <property type="match status" value="1"/>
</dbReference>
<dbReference type="NCBIfam" id="NF000818">
    <property type="entry name" value="PRK00062.1"/>
    <property type="match status" value="1"/>
</dbReference>
<dbReference type="PANTHER" id="PTHR43713">
    <property type="entry name" value="GLUTAMATE-1-SEMIALDEHYDE 2,1-AMINOMUTASE"/>
    <property type="match status" value="1"/>
</dbReference>
<dbReference type="PANTHER" id="PTHR43713:SF3">
    <property type="entry name" value="GLUTAMATE-1-SEMIALDEHYDE 2,1-AMINOMUTASE 1, CHLOROPLASTIC-RELATED"/>
    <property type="match status" value="1"/>
</dbReference>
<dbReference type="Pfam" id="PF00202">
    <property type="entry name" value="Aminotran_3"/>
    <property type="match status" value="1"/>
</dbReference>
<dbReference type="SUPFAM" id="SSF53383">
    <property type="entry name" value="PLP-dependent transferases"/>
    <property type="match status" value="1"/>
</dbReference>
<dbReference type="PROSITE" id="PS00600">
    <property type="entry name" value="AA_TRANSFER_CLASS_3"/>
    <property type="match status" value="1"/>
</dbReference>
<feature type="chain" id="PRO_0000120445" description="Glutamate-1-semialdehyde 2,1-aminomutase 1">
    <location>
        <begin position="1"/>
        <end position="428"/>
    </location>
</feature>
<feature type="modified residue" description="N6-(pyridoxal phosphate)lysine" evidence="1">
    <location>
        <position position="267"/>
    </location>
</feature>
<comment type="catalytic activity">
    <reaction evidence="1">
        <text>(S)-4-amino-5-oxopentanoate = 5-aminolevulinate</text>
        <dbReference type="Rhea" id="RHEA:14265"/>
        <dbReference type="ChEBI" id="CHEBI:57501"/>
        <dbReference type="ChEBI" id="CHEBI:356416"/>
        <dbReference type="EC" id="5.4.3.8"/>
    </reaction>
</comment>
<comment type="cofactor">
    <cofactor evidence="1">
        <name>pyridoxal 5'-phosphate</name>
        <dbReference type="ChEBI" id="CHEBI:597326"/>
    </cofactor>
</comment>
<comment type="pathway">
    <text evidence="1">Porphyrin-containing compound metabolism; protoporphyrin-IX biosynthesis; 5-aminolevulinate from L-glutamyl-tRNA(Glu): step 2/2.</text>
</comment>
<comment type="subunit">
    <text evidence="1">Homodimer.</text>
</comment>
<comment type="subcellular location">
    <subcellularLocation>
        <location evidence="1">Cytoplasm</location>
    </subcellularLocation>
</comment>
<comment type="similarity">
    <text evidence="1">Belongs to the class-III pyridoxal-phosphate-dependent aminotransferase family. HemL subfamily.</text>
</comment>
<gene>
    <name evidence="1" type="primary">hemL1</name>
    <name type="ordered locus">SA1491</name>
</gene>
<sequence>MRYTKSEEAMKVAETLMPGGVNSPVRAFKSVDTPAIFMDHGKGSKIYDIDGNEYIDYVLSWGPLILGHRDPQVISHLHEAIDKGTSFGASTLLENKLAQLVIDRVPSIEKVRMVSSGTEATLDTLRLARGYTGRNKIVKFEGCYHGHSDSLLIKAGSGVATLGLPDSPGVPEGIAKNTITVPYNDLDALKIAFEKFGDDIAGVIVEPVAGNMGVVPPIEGFLQGLRDITTEYGALLIFDEVMTGFRVGYHCAQGYFGVTPDLTCLGKVIGGGLPVGAFGGKKEIMDHIAPLGNIYQAGTLSGNPLAMTSGYETLSQLTPETYEYFNMLGDILEDGLKRVFAKHNVPITVNRAGSMIGYFLNEGPVTNFEQANKSDLKLFAEMYREMAKEGVFLPPSQFEGTFLSTAHTKEDIEKTIQAFDTALSRIVK</sequence>
<protein>
    <recommendedName>
        <fullName evidence="1">Glutamate-1-semialdehyde 2,1-aminomutase 1</fullName>
        <shortName evidence="1">GSA 1</shortName>
        <ecNumber evidence="1">5.4.3.8</ecNumber>
    </recommendedName>
    <alternativeName>
        <fullName evidence="1">Glutamate-1-semialdehyde aminotransferase 1</fullName>
        <shortName evidence="1">GSA-AT 1</shortName>
    </alternativeName>
</protein>